<comment type="similarity">
    <text evidence="1">Belongs to the bacilliredoxin family.</text>
</comment>
<name>Y1990_BACHK</name>
<dbReference type="EMBL" id="AE017355">
    <property type="protein sequence ID" value="AAT61787.1"/>
    <property type="molecule type" value="Genomic_DNA"/>
</dbReference>
<dbReference type="RefSeq" id="WP_000063712.1">
    <property type="nucleotide sequence ID" value="NC_005957.1"/>
</dbReference>
<dbReference type="RefSeq" id="YP_036319.1">
    <property type="nucleotide sequence ID" value="NC_005957.1"/>
</dbReference>
<dbReference type="SMR" id="Q6HJF7"/>
<dbReference type="KEGG" id="btk:BT9727_1990"/>
<dbReference type="PATRIC" id="fig|281309.8.peg.2094"/>
<dbReference type="HOGENOM" id="CLU_132521_0_0_9"/>
<dbReference type="Proteomes" id="UP000001301">
    <property type="component" value="Chromosome"/>
</dbReference>
<dbReference type="GO" id="GO:0045454">
    <property type="term" value="P:cell redox homeostasis"/>
    <property type="evidence" value="ECO:0000250"/>
    <property type="project" value="UniProtKB"/>
</dbReference>
<dbReference type="Gene3D" id="6.10.250.2150">
    <property type="match status" value="1"/>
</dbReference>
<dbReference type="Gene3D" id="3.40.30.10">
    <property type="entry name" value="Glutaredoxin"/>
    <property type="match status" value="1"/>
</dbReference>
<dbReference type="InterPro" id="IPR009474">
    <property type="entry name" value="BrxB/BrxA"/>
</dbReference>
<dbReference type="NCBIfam" id="TIGR04191">
    <property type="entry name" value="YphP_YqiW"/>
    <property type="match status" value="1"/>
</dbReference>
<dbReference type="PANTHER" id="PTHR40052:SF2">
    <property type="entry name" value="BACILLIREDOXIN BRXA"/>
    <property type="match status" value="1"/>
</dbReference>
<dbReference type="PANTHER" id="PTHR40052">
    <property type="entry name" value="UPF0403 PROTEIN YQIW-RELATED"/>
    <property type="match status" value="1"/>
</dbReference>
<dbReference type="Pfam" id="PF06491">
    <property type="entry name" value="Disulph_isomer"/>
    <property type="match status" value="1"/>
</dbReference>
<organism>
    <name type="scientific">Bacillus thuringiensis subsp. konkukian (strain 97-27)</name>
    <dbReference type="NCBI Taxonomy" id="281309"/>
    <lineage>
        <taxon>Bacteria</taxon>
        <taxon>Bacillati</taxon>
        <taxon>Bacillota</taxon>
        <taxon>Bacilli</taxon>
        <taxon>Bacillales</taxon>
        <taxon>Bacillaceae</taxon>
        <taxon>Bacillus</taxon>
        <taxon>Bacillus cereus group</taxon>
    </lineage>
</organism>
<evidence type="ECO:0000305" key="1"/>
<proteinExistence type="inferred from homology"/>
<accession>Q6HJF7</accession>
<gene>
    <name type="ordered locus">BT9727_1990</name>
</gene>
<sequence length="144" mass="15970">MSNAYEEYMRQMVIPMRQELVRSGFEELTTEEAVTEFMENTTGTTLVVVNSVCGCAAGLARPSAGQAVVRAEKQPDHLVTVFAGQDKDATAKMREYFGEIPPSSPSMALLKGKEVVHFIHRHEIEGATMDEIITNLEQAFEKNC</sequence>
<reference key="1">
    <citation type="journal article" date="2006" name="J. Bacteriol.">
        <title>Pathogenomic sequence analysis of Bacillus cereus and Bacillus thuringiensis isolates closely related to Bacillus anthracis.</title>
        <authorList>
            <person name="Han C.S."/>
            <person name="Xie G."/>
            <person name="Challacombe J.F."/>
            <person name="Altherr M.R."/>
            <person name="Bhotika S.S."/>
            <person name="Bruce D."/>
            <person name="Campbell C.S."/>
            <person name="Campbell M.L."/>
            <person name="Chen J."/>
            <person name="Chertkov O."/>
            <person name="Cleland C."/>
            <person name="Dimitrijevic M."/>
            <person name="Doggett N.A."/>
            <person name="Fawcett J.J."/>
            <person name="Glavina T."/>
            <person name="Goodwin L.A."/>
            <person name="Hill K.K."/>
            <person name="Hitchcock P."/>
            <person name="Jackson P.J."/>
            <person name="Keim P."/>
            <person name="Kewalramani A.R."/>
            <person name="Longmire J."/>
            <person name="Lucas S."/>
            <person name="Malfatti S."/>
            <person name="McMurry K."/>
            <person name="Meincke L.J."/>
            <person name="Misra M."/>
            <person name="Moseman B.L."/>
            <person name="Mundt M."/>
            <person name="Munk A.C."/>
            <person name="Okinaka R.T."/>
            <person name="Parson-Quintana B."/>
            <person name="Reilly L.P."/>
            <person name="Richardson P."/>
            <person name="Robinson D.L."/>
            <person name="Rubin E."/>
            <person name="Saunders E."/>
            <person name="Tapia R."/>
            <person name="Tesmer J.G."/>
            <person name="Thayer N."/>
            <person name="Thompson L.S."/>
            <person name="Tice H."/>
            <person name="Ticknor L.O."/>
            <person name="Wills P.L."/>
            <person name="Brettin T.S."/>
            <person name="Gilna P."/>
        </authorList>
    </citation>
    <scope>NUCLEOTIDE SEQUENCE [LARGE SCALE GENOMIC DNA]</scope>
    <source>
        <strain>97-27</strain>
    </source>
</reference>
<protein>
    <recommendedName>
        <fullName evidence="1">Bacilliredoxin BT9727_1990</fullName>
    </recommendedName>
</protein>
<feature type="chain" id="PRO_0000271987" description="Bacilliredoxin BT9727_1990">
    <location>
        <begin position="1"/>
        <end position="144"/>
    </location>
</feature>